<dbReference type="EC" id="3.1.1.7"/>
<dbReference type="EMBL" id="AJ515147">
    <property type="protein sequence ID" value="CAD56155.1"/>
    <property type="molecule type" value="mRNA"/>
</dbReference>
<dbReference type="EMBL" id="AJ489456">
    <property type="protein sequence ID" value="CAD33707.2"/>
    <property type="molecule type" value="mRNA"/>
</dbReference>
<dbReference type="SMR" id="Q86GC8"/>
<dbReference type="ESTHER" id="culpi-ACHE1">
    <property type="family name" value="ACHE"/>
</dbReference>
<dbReference type="GlyCosmos" id="Q86GC8">
    <property type="glycosylation" value="2 sites, No reported glycans"/>
</dbReference>
<dbReference type="EnsemblMetazoa" id="XM_039575023.2">
    <property type="protein sequence ID" value="XP_039430957.1"/>
    <property type="gene ID" value="LOC120414010"/>
</dbReference>
<dbReference type="GO" id="GO:0005615">
    <property type="term" value="C:extracellular space"/>
    <property type="evidence" value="ECO:0007669"/>
    <property type="project" value="TreeGrafter"/>
</dbReference>
<dbReference type="GO" id="GO:0005886">
    <property type="term" value="C:plasma membrane"/>
    <property type="evidence" value="ECO:0007669"/>
    <property type="project" value="UniProtKB-SubCell"/>
</dbReference>
<dbReference type="GO" id="GO:0045202">
    <property type="term" value="C:synapse"/>
    <property type="evidence" value="ECO:0007669"/>
    <property type="project" value="UniProtKB-SubCell"/>
</dbReference>
<dbReference type="GO" id="GO:0003990">
    <property type="term" value="F:acetylcholinesterase activity"/>
    <property type="evidence" value="ECO:0007669"/>
    <property type="project" value="UniProtKB-EC"/>
</dbReference>
<dbReference type="GO" id="GO:0006581">
    <property type="term" value="P:acetylcholine catabolic process"/>
    <property type="evidence" value="ECO:0007669"/>
    <property type="project" value="TreeGrafter"/>
</dbReference>
<dbReference type="GO" id="GO:0019695">
    <property type="term" value="P:choline metabolic process"/>
    <property type="evidence" value="ECO:0007669"/>
    <property type="project" value="TreeGrafter"/>
</dbReference>
<dbReference type="CDD" id="cd00312">
    <property type="entry name" value="Esterase_lipase"/>
    <property type="match status" value="1"/>
</dbReference>
<dbReference type="FunFam" id="3.40.50.1820:FF:000029">
    <property type="entry name" value="Acetylcholinesterase"/>
    <property type="match status" value="1"/>
</dbReference>
<dbReference type="Gene3D" id="3.40.50.1820">
    <property type="entry name" value="alpha/beta hydrolase"/>
    <property type="match status" value="1"/>
</dbReference>
<dbReference type="InterPro" id="IPR029058">
    <property type="entry name" value="AB_hydrolase_fold"/>
</dbReference>
<dbReference type="InterPro" id="IPR050654">
    <property type="entry name" value="AChE-related_enzymes"/>
</dbReference>
<dbReference type="InterPro" id="IPR002018">
    <property type="entry name" value="CarbesteraseB"/>
</dbReference>
<dbReference type="InterPro" id="IPR019826">
    <property type="entry name" value="Carboxylesterase_B_AS"/>
</dbReference>
<dbReference type="InterPro" id="IPR019819">
    <property type="entry name" value="Carboxylesterase_B_CS"/>
</dbReference>
<dbReference type="InterPro" id="IPR000997">
    <property type="entry name" value="Cholinesterase"/>
</dbReference>
<dbReference type="PANTHER" id="PTHR43918">
    <property type="entry name" value="ACETYLCHOLINESTERASE"/>
    <property type="match status" value="1"/>
</dbReference>
<dbReference type="PANTHER" id="PTHR43918:SF12">
    <property type="entry name" value="ACETYLCHOLINESTERASE 1"/>
    <property type="match status" value="1"/>
</dbReference>
<dbReference type="Pfam" id="PF00135">
    <property type="entry name" value="COesterase"/>
    <property type="match status" value="1"/>
</dbReference>
<dbReference type="PRINTS" id="PR00878">
    <property type="entry name" value="CHOLNESTRASE"/>
</dbReference>
<dbReference type="SUPFAM" id="SSF53474">
    <property type="entry name" value="alpha/beta-Hydrolases"/>
    <property type="match status" value="1"/>
</dbReference>
<dbReference type="PROSITE" id="PS00122">
    <property type="entry name" value="CARBOXYLESTERASE_B_1"/>
    <property type="match status" value="1"/>
</dbReference>
<dbReference type="PROSITE" id="PS00941">
    <property type="entry name" value="CARBOXYLESTERASE_B_2"/>
    <property type="match status" value="1"/>
</dbReference>
<gene>
    <name type="primary">ACHE1</name>
</gene>
<reference evidence="7" key="1">
    <citation type="journal article" date="2003" name="Nature">
        <title>Insecticide resistance in mosquito vectors.</title>
        <authorList>
            <person name="Weill M."/>
            <person name="Lutfalla G."/>
            <person name="Mogensen K."/>
            <person name="Chandre F."/>
            <person name="Berthomieu A."/>
            <person name="Berticat C."/>
            <person name="Pasteur N."/>
            <person name="Philips A."/>
            <person name="Fort P."/>
            <person name="Raymond M."/>
        </authorList>
    </citation>
    <scope>NUCLEOTIDE SEQUENCE [MRNA]</scope>
    <source>
        <strain evidence="8">SLAB</strain>
        <strain evidence="9">SR</strain>
    </source>
</reference>
<proteinExistence type="evidence at transcript level"/>
<keyword id="KW-1003">Cell membrane</keyword>
<keyword id="KW-1015">Disulfide bond</keyword>
<keyword id="KW-0325">Glycoprotein</keyword>
<keyword id="KW-0378">Hydrolase</keyword>
<keyword id="KW-0472">Membrane</keyword>
<keyword id="KW-0531">Neurotransmitter degradation</keyword>
<keyword id="KW-0964">Secreted</keyword>
<keyword id="KW-0719">Serine esterase</keyword>
<keyword id="KW-0732">Signal</keyword>
<keyword id="KW-0770">Synapse</keyword>
<sequence length="702" mass="78179">MEIRGLITRLLGPCHLRHLILCSLGLYSILVQSVHCRHHDIGSSVAHQLGSKYSQSSSLSSSSQSSSSLAEEATLNKDSDAFFTPYIGHGDSVRIVDAELGTLEREHIHSTTTRRRGLTRRESSSDATDSDPLVITTDKGKIRGTTLEAPSGKKVDAWMGIPYAQPPLGPLRFRHPRPAERWTGVLNATKPPNSCVQIVDTVFGDFPGATMWNPNTPLSEDCLYINVVVPRPRPKNAAVMLWIFGGGFYSGTATLDVYDHRTLASEENVIVVSLQYRVASLGFLFLGTPEAPGNAGLFDQNLALRWVRDNIHRFGGDPSRVTLFGESAGAVSVSLHLLSALSRDLFQRAILQSGSPTAPWALVSREEATLRALRLAEAVNCPHDATKLSDAVECLRTKDPNELVDNEWGTLGICEFPFVPVVDGAFLDETPQRSLASGRFKKTDILTGSNTEEGYYFIIYYLTELLRKEEGVTVTREEFLQAVRELNPYVNGAARQAIVFEYTDWIEPDNPNSNRDALDKMVGDYHFTCNVNEFAQRYAEEGNNVFMYLYTHRSKGNPWPRWTGVMHGDEINYVFGEPLNSALGYQDDEKDFSRKIMRYWSNFAKTGNPNPSTPSVDLPEWPKHTAHGRHYLELGLNTTFVGRGPRLRQCAFWKKYLPQLVAATSNLQVTPAPSVPCESSSTSYRSTLLLIVTLLLVTRFKI</sequence>
<name>ACES_CULPI</name>
<organism evidence="9">
    <name type="scientific">Culex pipiens</name>
    <name type="common">House mosquito</name>
    <dbReference type="NCBI Taxonomy" id="7175"/>
    <lineage>
        <taxon>Eukaryota</taxon>
        <taxon>Metazoa</taxon>
        <taxon>Ecdysozoa</taxon>
        <taxon>Arthropoda</taxon>
        <taxon>Hexapoda</taxon>
        <taxon>Insecta</taxon>
        <taxon>Pterygota</taxon>
        <taxon>Neoptera</taxon>
        <taxon>Endopterygota</taxon>
        <taxon>Diptera</taxon>
        <taxon>Nematocera</taxon>
        <taxon>Culicoidea</taxon>
        <taxon>Culicidae</taxon>
        <taxon>Culicinae</taxon>
        <taxon>Culicini</taxon>
        <taxon>Culex</taxon>
        <taxon>Culex</taxon>
    </lineage>
</organism>
<accession>Q86GC8</accession>
<accession>Q86GD0</accession>
<protein>
    <recommendedName>
        <fullName>Acetylcholinesterase</fullName>
        <shortName>AChE</shortName>
        <ecNumber>3.1.1.7</ecNumber>
    </recommendedName>
</protein>
<evidence type="ECO:0000250" key="1"/>
<evidence type="ECO:0000250" key="2">
    <source>
        <dbReference type="UniProtKB" id="P22303"/>
    </source>
</evidence>
<evidence type="ECO:0000255" key="3"/>
<evidence type="ECO:0000255" key="4">
    <source>
        <dbReference type="PROSITE-ProRule" id="PRU10039"/>
    </source>
</evidence>
<evidence type="ECO:0000256" key="5">
    <source>
        <dbReference type="SAM" id="MobiDB-lite"/>
    </source>
</evidence>
<evidence type="ECO:0000269" key="6">
    <source>
    </source>
</evidence>
<evidence type="ECO:0000305" key="7"/>
<evidence type="ECO:0000312" key="8">
    <source>
        <dbReference type="EMBL" id="CAD33707.2"/>
    </source>
</evidence>
<evidence type="ECO:0000312" key="9">
    <source>
        <dbReference type="EMBL" id="CAD56155.1"/>
    </source>
</evidence>
<comment type="function">
    <text evidence="7">Rapidly hydrolyzes choline released into the synapse.</text>
</comment>
<comment type="catalytic activity">
    <reaction evidence="2">
        <text>acetylcholine + H2O = choline + acetate + H(+)</text>
        <dbReference type="Rhea" id="RHEA:17561"/>
        <dbReference type="ChEBI" id="CHEBI:15354"/>
        <dbReference type="ChEBI" id="CHEBI:15355"/>
        <dbReference type="ChEBI" id="CHEBI:15377"/>
        <dbReference type="ChEBI" id="CHEBI:15378"/>
        <dbReference type="ChEBI" id="CHEBI:30089"/>
        <dbReference type="EC" id="3.1.1.7"/>
    </reaction>
</comment>
<comment type="subcellular location">
    <subcellularLocation>
        <location evidence="1">Synapse</location>
    </subcellularLocation>
    <subcellularLocation>
        <location evidence="1">Secreted</location>
    </subcellularLocation>
    <subcellularLocation>
        <location evidence="1">Cell membrane</location>
        <topology evidence="1">Peripheral membrane protein</topology>
    </subcellularLocation>
</comment>
<comment type="polymorphism">
    <text evidence="6">Strain SLAB is susceptible to insecticides while strain SR is resistant. Insensitivity to insecticides results from a loss of sensitivity of acetylcholinesterase to organophosphates and carbamates and is due to a variant at position 247.</text>
</comment>
<comment type="similarity">
    <text evidence="7">Belongs to the type-B carboxylesterase/lipase family.</text>
</comment>
<feature type="signal peptide" evidence="3">
    <location>
        <begin position="1"/>
        <end position="36"/>
    </location>
</feature>
<feature type="chain" id="PRO_0000008602" description="Acetylcholinesterase">
    <location>
        <begin position="37"/>
        <end position="702"/>
    </location>
</feature>
<feature type="region of interest" description="Disordered" evidence="5">
    <location>
        <begin position="107"/>
        <end position="134"/>
    </location>
</feature>
<feature type="active site" description="Acyl-ester intermediate" evidence="4">
    <location>
        <position position="327"/>
    </location>
</feature>
<feature type="active site" description="Charge relay system" evidence="1">
    <location>
        <position position="453"/>
    </location>
</feature>
<feature type="active site" description="Charge relay system" evidence="1">
    <location>
        <position position="567"/>
    </location>
</feature>
<feature type="glycosylation site" description="N-linked (GlcNAc...) asparagine" evidence="3">
    <location>
        <position position="187"/>
    </location>
</feature>
<feature type="glycosylation site" description="N-linked (GlcNAc...) asparagine" evidence="3">
    <location>
        <position position="637"/>
    </location>
</feature>
<feature type="disulfide bond" evidence="1">
    <location>
        <begin position="195"/>
        <end position="222"/>
    </location>
</feature>
<feature type="disulfide bond" evidence="1">
    <location>
        <begin position="381"/>
        <end position="394"/>
    </location>
</feature>
<feature type="disulfide bond" evidence="1">
    <location>
        <begin position="529"/>
        <end position="650"/>
    </location>
</feature>
<feature type="sequence variant" description="In strain: SR; confers resistance to insecticides." evidence="6">
    <original>G</original>
    <variation>S</variation>
    <location>
        <position position="247"/>
    </location>
</feature>